<name>MPH1_PYRO7</name>
<organism>
    <name type="scientific">Pyricularia oryzae (strain 70-15 / ATCC MYA-4617 / FGSC 8958)</name>
    <name type="common">Rice blast fungus</name>
    <name type="synonym">Magnaporthe oryzae</name>
    <dbReference type="NCBI Taxonomy" id="242507"/>
    <lineage>
        <taxon>Eukaryota</taxon>
        <taxon>Fungi</taxon>
        <taxon>Dikarya</taxon>
        <taxon>Ascomycota</taxon>
        <taxon>Pezizomycotina</taxon>
        <taxon>Sordariomycetes</taxon>
        <taxon>Sordariomycetidae</taxon>
        <taxon>Magnaporthales</taxon>
        <taxon>Pyriculariaceae</taxon>
        <taxon>Pyricularia</taxon>
    </lineage>
</organism>
<gene>
    <name evidence="1" type="primary">MPH1</name>
    <name type="ORF">MGG_04429</name>
</gene>
<proteinExistence type="inferred from homology"/>
<evidence type="ECO:0000250" key="1">
    <source>
        <dbReference type="UniProtKB" id="P40562"/>
    </source>
</evidence>
<evidence type="ECO:0000250" key="2">
    <source>
        <dbReference type="UniProtKB" id="Q9UT23"/>
    </source>
</evidence>
<evidence type="ECO:0000255" key="3">
    <source>
        <dbReference type="PROSITE-ProRule" id="PRU00541"/>
    </source>
</evidence>
<evidence type="ECO:0000255" key="4">
    <source>
        <dbReference type="PROSITE-ProRule" id="PRU00542"/>
    </source>
</evidence>
<evidence type="ECO:0000256" key="5">
    <source>
        <dbReference type="SAM" id="MobiDB-lite"/>
    </source>
</evidence>
<evidence type="ECO:0000305" key="6"/>
<accession>A4RN08</accession>
<accession>G4MZG1</accession>
<comment type="function">
    <text evidence="2">ATP-dependent DNA helicase involved in DNA damage repair by homologous recombination and in genome maintenance. Capable of unwinding D-loops. Plays a role in limiting crossover recombinants during mitotic DNA double-strand break (DSB) repair. Component of a FANCM-MHF complex which promotes gene conversion at blocked replication forks, probably by reversal of the stalled fork.</text>
</comment>
<comment type="catalytic activity">
    <reaction evidence="2">
        <text>ATP + H2O = ADP + phosphate + H(+)</text>
        <dbReference type="Rhea" id="RHEA:13065"/>
        <dbReference type="ChEBI" id="CHEBI:15377"/>
        <dbReference type="ChEBI" id="CHEBI:15378"/>
        <dbReference type="ChEBI" id="CHEBI:30616"/>
        <dbReference type="ChEBI" id="CHEBI:43474"/>
        <dbReference type="ChEBI" id="CHEBI:456216"/>
        <dbReference type="EC" id="3.6.4.12"/>
    </reaction>
</comment>
<comment type="subunit">
    <text evidence="2">Interacts with the MHF histone-fold complex to form the FANCM-MHF complex.</text>
</comment>
<comment type="subcellular location">
    <subcellularLocation>
        <location evidence="1">Nucleus</location>
    </subcellularLocation>
</comment>
<comment type="similarity">
    <text evidence="6">Belongs to the DEAD box helicase family. DEAH subfamily. FANCM sub-subfamily.</text>
</comment>
<feature type="chain" id="PRO_0000333376" description="ATP-dependent DNA helicase MPH1">
    <location>
        <begin position="1"/>
        <end position="1102"/>
    </location>
</feature>
<feature type="domain" description="Helicase ATP-binding" evidence="3">
    <location>
        <begin position="147"/>
        <end position="315"/>
    </location>
</feature>
<feature type="domain" description="Helicase C-terminal" evidence="4">
    <location>
        <begin position="490"/>
        <end position="651"/>
    </location>
</feature>
<feature type="region of interest" description="Disordered" evidence="5">
    <location>
        <begin position="19"/>
        <end position="55"/>
    </location>
</feature>
<feature type="region of interest" description="Disordered" evidence="5">
    <location>
        <begin position="672"/>
        <end position="702"/>
    </location>
</feature>
<feature type="region of interest" description="Disordered" evidence="5">
    <location>
        <begin position="720"/>
        <end position="743"/>
    </location>
</feature>
<feature type="region of interest" description="Disordered" evidence="5">
    <location>
        <begin position="818"/>
        <end position="837"/>
    </location>
</feature>
<feature type="region of interest" description="Disordered" evidence="5">
    <location>
        <begin position="858"/>
        <end position="1102"/>
    </location>
</feature>
<feature type="short sequence motif" description="DEAH box" evidence="3">
    <location>
        <begin position="263"/>
        <end position="266"/>
    </location>
</feature>
<feature type="compositionally biased region" description="Polar residues" evidence="5">
    <location>
        <begin position="38"/>
        <end position="49"/>
    </location>
</feature>
<feature type="compositionally biased region" description="Basic residues" evidence="5">
    <location>
        <begin position="687"/>
        <end position="699"/>
    </location>
</feature>
<feature type="compositionally biased region" description="Basic and acidic residues" evidence="5">
    <location>
        <begin position="822"/>
        <end position="837"/>
    </location>
</feature>
<feature type="compositionally biased region" description="Low complexity" evidence="5">
    <location>
        <begin position="1003"/>
        <end position="1019"/>
    </location>
</feature>
<feature type="compositionally biased region" description="Acidic residues" evidence="5">
    <location>
        <begin position="1069"/>
        <end position="1082"/>
    </location>
</feature>
<feature type="binding site" evidence="3">
    <location>
        <begin position="160"/>
        <end position="167"/>
    </location>
    <ligand>
        <name>ATP</name>
        <dbReference type="ChEBI" id="CHEBI:30616"/>
    </ligand>
</feature>
<dbReference type="EC" id="3.6.4.12" evidence="1 2"/>
<dbReference type="EMBL" id="CM001232">
    <property type="protein sequence ID" value="EHA53716.1"/>
    <property type="molecule type" value="Genomic_DNA"/>
</dbReference>
<dbReference type="RefSeq" id="XP_003713523.1">
    <property type="nucleotide sequence ID" value="XM_003713475.1"/>
</dbReference>
<dbReference type="SMR" id="A4RN08"/>
<dbReference type="FunCoup" id="A4RN08">
    <property type="interactions" value="185"/>
</dbReference>
<dbReference type="STRING" id="242507.A4RN08"/>
<dbReference type="EnsemblFungi" id="MGG_04429T0">
    <property type="protein sequence ID" value="MGG_04429T0"/>
    <property type="gene ID" value="MGG_04429"/>
</dbReference>
<dbReference type="GeneID" id="2678216"/>
<dbReference type="KEGG" id="mgr:MGG_04429"/>
<dbReference type="VEuPathDB" id="FungiDB:MGG_04429"/>
<dbReference type="eggNOG" id="KOG0354">
    <property type="taxonomic scope" value="Eukaryota"/>
</dbReference>
<dbReference type="HOGENOM" id="CLU_002513_0_1_1"/>
<dbReference type="InParanoid" id="A4RN08"/>
<dbReference type="OMA" id="FMMRAIF"/>
<dbReference type="OrthoDB" id="164902at2759"/>
<dbReference type="Proteomes" id="UP000009058">
    <property type="component" value="Chromosome 2"/>
</dbReference>
<dbReference type="GO" id="GO:0005634">
    <property type="term" value="C:nucleus"/>
    <property type="evidence" value="ECO:0007669"/>
    <property type="project" value="UniProtKB-SubCell"/>
</dbReference>
<dbReference type="GO" id="GO:0043138">
    <property type="term" value="F:3'-5' DNA helicase activity"/>
    <property type="evidence" value="ECO:0007669"/>
    <property type="project" value="InterPro"/>
</dbReference>
<dbReference type="GO" id="GO:0005524">
    <property type="term" value="F:ATP binding"/>
    <property type="evidence" value="ECO:0007669"/>
    <property type="project" value="UniProtKB-KW"/>
</dbReference>
<dbReference type="GO" id="GO:0016887">
    <property type="term" value="F:ATP hydrolysis activity"/>
    <property type="evidence" value="ECO:0007669"/>
    <property type="project" value="RHEA"/>
</dbReference>
<dbReference type="GO" id="GO:0000400">
    <property type="term" value="F:four-way junction DNA binding"/>
    <property type="evidence" value="ECO:0007669"/>
    <property type="project" value="TreeGrafter"/>
</dbReference>
<dbReference type="GO" id="GO:0009378">
    <property type="term" value="F:four-way junction helicase activity"/>
    <property type="evidence" value="ECO:0007669"/>
    <property type="project" value="TreeGrafter"/>
</dbReference>
<dbReference type="GO" id="GO:0045003">
    <property type="term" value="P:double-strand break repair via synthesis-dependent strand annealing"/>
    <property type="evidence" value="ECO:0007669"/>
    <property type="project" value="TreeGrafter"/>
</dbReference>
<dbReference type="GO" id="GO:0036297">
    <property type="term" value="P:interstrand cross-link repair"/>
    <property type="evidence" value="ECO:0007669"/>
    <property type="project" value="TreeGrafter"/>
</dbReference>
<dbReference type="CDD" id="cd18033">
    <property type="entry name" value="DEXDc_FANCM"/>
    <property type="match status" value="1"/>
</dbReference>
<dbReference type="CDD" id="cd12091">
    <property type="entry name" value="FANCM_ID"/>
    <property type="match status" value="1"/>
</dbReference>
<dbReference type="CDD" id="cd18801">
    <property type="entry name" value="SF2_C_FANCM_Hef"/>
    <property type="match status" value="1"/>
</dbReference>
<dbReference type="FunFam" id="3.40.50.300:FF:001992">
    <property type="entry name" value="ATP-dependent RNA helicase, putative"/>
    <property type="match status" value="1"/>
</dbReference>
<dbReference type="FunFam" id="3.40.50.300:FF:000861">
    <property type="entry name" value="Fanconi anemia, complementation group M"/>
    <property type="match status" value="1"/>
</dbReference>
<dbReference type="Gene3D" id="1.20.1320.20">
    <property type="entry name" value="hef helicase domain"/>
    <property type="match status" value="1"/>
</dbReference>
<dbReference type="Gene3D" id="3.40.50.300">
    <property type="entry name" value="P-loop containing nucleotide triphosphate hydrolases"/>
    <property type="match status" value="2"/>
</dbReference>
<dbReference type="InterPro" id="IPR039686">
    <property type="entry name" value="FANCM/Mph1-like_ID"/>
</dbReference>
<dbReference type="InterPro" id="IPR044749">
    <property type="entry name" value="FANCM_DEXDc"/>
</dbReference>
<dbReference type="InterPro" id="IPR006935">
    <property type="entry name" value="Helicase/UvrB_N"/>
</dbReference>
<dbReference type="InterPro" id="IPR014001">
    <property type="entry name" value="Helicase_ATP-bd"/>
</dbReference>
<dbReference type="InterPro" id="IPR001650">
    <property type="entry name" value="Helicase_C-like"/>
</dbReference>
<dbReference type="InterPro" id="IPR027417">
    <property type="entry name" value="P-loop_NTPase"/>
</dbReference>
<dbReference type="PANTHER" id="PTHR14025">
    <property type="entry name" value="FANCONI ANEMIA GROUP M FANCM FAMILY MEMBER"/>
    <property type="match status" value="1"/>
</dbReference>
<dbReference type="PANTHER" id="PTHR14025:SF20">
    <property type="entry name" value="FANCONI ANEMIA GROUP M PROTEIN"/>
    <property type="match status" value="1"/>
</dbReference>
<dbReference type="Pfam" id="PF00271">
    <property type="entry name" value="Helicase_C"/>
    <property type="match status" value="1"/>
</dbReference>
<dbReference type="Pfam" id="PF04851">
    <property type="entry name" value="ResIII"/>
    <property type="match status" value="1"/>
</dbReference>
<dbReference type="SMART" id="SM00487">
    <property type="entry name" value="DEXDc"/>
    <property type="match status" value="1"/>
</dbReference>
<dbReference type="SMART" id="SM00490">
    <property type="entry name" value="HELICc"/>
    <property type="match status" value="1"/>
</dbReference>
<dbReference type="SUPFAM" id="SSF52540">
    <property type="entry name" value="P-loop containing nucleoside triphosphate hydrolases"/>
    <property type="match status" value="1"/>
</dbReference>
<dbReference type="PROSITE" id="PS51192">
    <property type="entry name" value="HELICASE_ATP_BIND_1"/>
    <property type="match status" value="1"/>
</dbReference>
<dbReference type="PROSITE" id="PS51194">
    <property type="entry name" value="HELICASE_CTER"/>
    <property type="match status" value="1"/>
</dbReference>
<sequence>MGSDYDSFDDDVADEVLMALDKPATSGLHSREQEQQRDISNATPHTSTDLELEDFGSDAFDYSPERERAKPIQTARNQARTFQQTTLLGRIASQAPEPLGTQPRNSRVFRADLPPEVPTHHALDPEALKTWVYPTNLGPIRDYQFSIVKNGLFNNTLVALPTGLGKTFIAATVILNFFRWTRNAQMVFVAPTKPLASQQVEACLNIAGIPRSQSTLLTGETKPVLREAEWEGKRLFFMTPQTLMNDLSKGYADPKRIVLLVVDEAHRATGDYAYVKVIEFIRRFSKSFRVLALTATPGSTVEGVQDVIDNLGVSHVEIRTEESIDIRNYVHSREIDRVVLEPSDEMLRISELFSQALKPLHSKISQQKIYIGRDPMSITTFGLLKARQDWMKGPGRFANQGLKMMLMAIFTILQSLAHAIKLLNYHGIRPFYDNLVAFRSETEDKGQKGSKYKRQLIGEQSFQEMMDLASKWLKIDGFAGHPKLTHLCDNLLNYFMDAGEGSSTRVIVFSEYRDSAEEITRVLNVHKPMISASLFVGQADSKKSEGMKQKQQIETIAKFRDGIFNVLVATSIGEEGLDIGQVDLIICYDASSSPIRMLQRMGRTGRKRAGKITLLLMKGKEEDNYAKAQDNYEKMQKLICEGSRFNFRHDLSSRIVPRDVKPEVDKRMVEIPIENTQDTSLPEPKARSTRGKKASKKKFNMPDGVETGFNSVASMLGISASKTKAKPNKSPKKAESKETDEISPVPPLEGVLLSVKELAELNKKYRDLPFFHQDTEEICMPSLTARPDLQRVLRPTVHVKHGSYTKRCVRLFKKLSHSQGIETRHTKPHGDTDKSRYLDISVPPFAEDSGEDVVVVPSGRKRSLSPSSAASPPPPGRKRKANTTAAPRSKRQSVVDEYASESEDDTAAARQRKTNAAASPESKRQSVLDEYASESDAEAVTQASEDEESVGSLADFISDGEANGNFPKDMTGFTSDEDDDYRSGSLAKSSLSGPLSGRQVHRSSGAASKSGSTASTAAKPFFVPASLPGTQQTDDDEDMPDIGILVGKKQPETRVRKPAKKSNAVFLSSDDDDDDNDDEDDVQPGPAKRTVRRRVIEDSESG</sequence>
<protein>
    <recommendedName>
        <fullName evidence="1">ATP-dependent DNA helicase MPH1</fullName>
        <ecNumber evidence="1 2">3.6.4.12</ecNumber>
    </recommendedName>
    <alternativeName>
        <fullName evidence="2">FANCM-like protein 1</fullName>
    </alternativeName>
</protein>
<reference key="1">
    <citation type="journal article" date="2005" name="Nature">
        <title>The genome sequence of the rice blast fungus Magnaporthe grisea.</title>
        <authorList>
            <person name="Dean R.A."/>
            <person name="Talbot N.J."/>
            <person name="Ebbole D.J."/>
            <person name="Farman M.L."/>
            <person name="Mitchell T.K."/>
            <person name="Orbach M.J."/>
            <person name="Thon M.R."/>
            <person name="Kulkarni R."/>
            <person name="Xu J.-R."/>
            <person name="Pan H."/>
            <person name="Read N.D."/>
            <person name="Lee Y.-H."/>
            <person name="Carbone I."/>
            <person name="Brown D."/>
            <person name="Oh Y.Y."/>
            <person name="Donofrio N."/>
            <person name="Jeong J.S."/>
            <person name="Soanes D.M."/>
            <person name="Djonovic S."/>
            <person name="Kolomiets E."/>
            <person name="Rehmeyer C."/>
            <person name="Li W."/>
            <person name="Harding M."/>
            <person name="Kim S."/>
            <person name="Lebrun M.-H."/>
            <person name="Bohnert H."/>
            <person name="Coughlan S."/>
            <person name="Butler J."/>
            <person name="Calvo S.E."/>
            <person name="Ma L.-J."/>
            <person name="Nicol R."/>
            <person name="Purcell S."/>
            <person name="Nusbaum C."/>
            <person name="Galagan J.E."/>
            <person name="Birren B.W."/>
        </authorList>
    </citation>
    <scope>NUCLEOTIDE SEQUENCE [LARGE SCALE GENOMIC DNA]</scope>
    <source>
        <strain>70-15 / ATCC MYA-4617 / FGSC 8958</strain>
    </source>
</reference>
<keyword id="KW-0067">ATP-binding</keyword>
<keyword id="KW-0227">DNA damage</keyword>
<keyword id="KW-0234">DNA repair</keyword>
<keyword id="KW-0238">DNA-binding</keyword>
<keyword id="KW-0347">Helicase</keyword>
<keyword id="KW-0378">Hydrolase</keyword>
<keyword id="KW-0547">Nucleotide-binding</keyword>
<keyword id="KW-0539">Nucleus</keyword>
<keyword id="KW-1185">Reference proteome</keyword>